<reference key="1">
    <citation type="journal article" date="2006" name="Genome Biol.">
        <title>The genome of Rhizobium leguminosarum has recognizable core and accessory components.</title>
        <authorList>
            <person name="Young J.P.W."/>
            <person name="Crossman L.C."/>
            <person name="Johnston A.W.B."/>
            <person name="Thomson N.R."/>
            <person name="Ghazoui Z.F."/>
            <person name="Hull K.H."/>
            <person name="Wexler M."/>
            <person name="Curson A.R.J."/>
            <person name="Todd J.D."/>
            <person name="Poole P.S."/>
            <person name="Mauchline T.H."/>
            <person name="East A.K."/>
            <person name="Quail M.A."/>
            <person name="Churcher C."/>
            <person name="Arrowsmith C."/>
            <person name="Cherevach I."/>
            <person name="Chillingworth T."/>
            <person name="Clarke K."/>
            <person name="Cronin A."/>
            <person name="Davis P."/>
            <person name="Fraser A."/>
            <person name="Hance Z."/>
            <person name="Hauser H."/>
            <person name="Jagels K."/>
            <person name="Moule S."/>
            <person name="Mungall K."/>
            <person name="Norbertczak H."/>
            <person name="Rabbinowitsch E."/>
            <person name="Sanders M."/>
            <person name="Simmonds M."/>
            <person name="Whitehead S."/>
            <person name="Parkhill J."/>
        </authorList>
    </citation>
    <scope>NUCLEOTIDE SEQUENCE [LARGE SCALE GENOMIC DNA]</scope>
    <source>
        <strain>DSM 114642 / LMG 32736 / 3841</strain>
    </source>
</reference>
<dbReference type="EC" id="1.3.1.98" evidence="1"/>
<dbReference type="EMBL" id="AM236080">
    <property type="protein sequence ID" value="CAK08792.1"/>
    <property type="molecule type" value="Genomic_DNA"/>
</dbReference>
<dbReference type="RefSeq" id="WP_003541407.1">
    <property type="nucleotide sequence ID" value="NC_008380.1"/>
</dbReference>
<dbReference type="SMR" id="Q1ME35"/>
<dbReference type="EnsemblBacteria" id="CAK08792">
    <property type="protein sequence ID" value="CAK08792"/>
    <property type="gene ID" value="RL3305"/>
</dbReference>
<dbReference type="KEGG" id="rle:RL3305"/>
<dbReference type="eggNOG" id="COG0812">
    <property type="taxonomic scope" value="Bacteria"/>
</dbReference>
<dbReference type="HOGENOM" id="CLU_035304_1_0_5"/>
<dbReference type="UniPathway" id="UPA00219"/>
<dbReference type="Proteomes" id="UP000006575">
    <property type="component" value="Chromosome"/>
</dbReference>
<dbReference type="GO" id="GO:0005829">
    <property type="term" value="C:cytosol"/>
    <property type="evidence" value="ECO:0007669"/>
    <property type="project" value="TreeGrafter"/>
</dbReference>
<dbReference type="GO" id="GO:0071949">
    <property type="term" value="F:FAD binding"/>
    <property type="evidence" value="ECO:0007669"/>
    <property type="project" value="InterPro"/>
</dbReference>
<dbReference type="GO" id="GO:0008762">
    <property type="term" value="F:UDP-N-acetylmuramate dehydrogenase activity"/>
    <property type="evidence" value="ECO:0007669"/>
    <property type="project" value="UniProtKB-UniRule"/>
</dbReference>
<dbReference type="GO" id="GO:0051301">
    <property type="term" value="P:cell division"/>
    <property type="evidence" value="ECO:0007669"/>
    <property type="project" value="UniProtKB-KW"/>
</dbReference>
<dbReference type="GO" id="GO:0071555">
    <property type="term" value="P:cell wall organization"/>
    <property type="evidence" value="ECO:0007669"/>
    <property type="project" value="UniProtKB-KW"/>
</dbReference>
<dbReference type="GO" id="GO:0009252">
    <property type="term" value="P:peptidoglycan biosynthetic process"/>
    <property type="evidence" value="ECO:0007669"/>
    <property type="project" value="UniProtKB-UniRule"/>
</dbReference>
<dbReference type="GO" id="GO:0008360">
    <property type="term" value="P:regulation of cell shape"/>
    <property type="evidence" value="ECO:0007669"/>
    <property type="project" value="UniProtKB-KW"/>
</dbReference>
<dbReference type="Gene3D" id="3.30.465.10">
    <property type="match status" value="1"/>
</dbReference>
<dbReference type="Gene3D" id="3.90.78.10">
    <property type="entry name" value="UDP-N-acetylenolpyruvoylglucosamine reductase, C-terminal domain"/>
    <property type="match status" value="1"/>
</dbReference>
<dbReference type="Gene3D" id="3.30.43.10">
    <property type="entry name" value="Uridine Diphospho-n-acetylenolpyruvylglucosamine Reductase, domain 2"/>
    <property type="match status" value="1"/>
</dbReference>
<dbReference type="HAMAP" id="MF_00037">
    <property type="entry name" value="MurB"/>
    <property type="match status" value="1"/>
</dbReference>
<dbReference type="InterPro" id="IPR016166">
    <property type="entry name" value="FAD-bd_PCMH"/>
</dbReference>
<dbReference type="InterPro" id="IPR036318">
    <property type="entry name" value="FAD-bd_PCMH-like_sf"/>
</dbReference>
<dbReference type="InterPro" id="IPR016167">
    <property type="entry name" value="FAD-bd_PCMH_sub1"/>
</dbReference>
<dbReference type="InterPro" id="IPR016169">
    <property type="entry name" value="FAD-bd_PCMH_sub2"/>
</dbReference>
<dbReference type="InterPro" id="IPR003170">
    <property type="entry name" value="MurB"/>
</dbReference>
<dbReference type="InterPro" id="IPR011601">
    <property type="entry name" value="MurB_C"/>
</dbReference>
<dbReference type="InterPro" id="IPR036635">
    <property type="entry name" value="MurB_C_sf"/>
</dbReference>
<dbReference type="InterPro" id="IPR006094">
    <property type="entry name" value="Oxid_FAD_bind_N"/>
</dbReference>
<dbReference type="NCBIfam" id="TIGR00179">
    <property type="entry name" value="murB"/>
    <property type="match status" value="1"/>
</dbReference>
<dbReference type="NCBIfam" id="NF010480">
    <property type="entry name" value="PRK13905.1"/>
    <property type="match status" value="1"/>
</dbReference>
<dbReference type="PANTHER" id="PTHR21071">
    <property type="entry name" value="UDP-N-ACETYLENOLPYRUVOYLGLUCOSAMINE REDUCTASE"/>
    <property type="match status" value="1"/>
</dbReference>
<dbReference type="PANTHER" id="PTHR21071:SF4">
    <property type="entry name" value="UDP-N-ACETYLENOLPYRUVOYLGLUCOSAMINE REDUCTASE"/>
    <property type="match status" value="1"/>
</dbReference>
<dbReference type="Pfam" id="PF01565">
    <property type="entry name" value="FAD_binding_4"/>
    <property type="match status" value="1"/>
</dbReference>
<dbReference type="Pfam" id="PF02873">
    <property type="entry name" value="MurB_C"/>
    <property type="match status" value="1"/>
</dbReference>
<dbReference type="SUPFAM" id="SSF56176">
    <property type="entry name" value="FAD-binding/transporter-associated domain-like"/>
    <property type="match status" value="1"/>
</dbReference>
<dbReference type="SUPFAM" id="SSF56194">
    <property type="entry name" value="Uridine diphospho-N-Acetylenolpyruvylglucosamine reductase, MurB, C-terminal domain"/>
    <property type="match status" value="1"/>
</dbReference>
<dbReference type="PROSITE" id="PS51387">
    <property type="entry name" value="FAD_PCMH"/>
    <property type="match status" value="1"/>
</dbReference>
<protein>
    <recommendedName>
        <fullName evidence="1">UDP-N-acetylenolpyruvoylglucosamine reductase</fullName>
        <ecNumber evidence="1">1.3.1.98</ecNumber>
    </recommendedName>
    <alternativeName>
        <fullName evidence="1">UDP-N-acetylmuramate dehydrogenase</fullName>
    </alternativeName>
</protein>
<keyword id="KW-0131">Cell cycle</keyword>
<keyword id="KW-0132">Cell division</keyword>
<keyword id="KW-0133">Cell shape</keyword>
<keyword id="KW-0961">Cell wall biogenesis/degradation</keyword>
<keyword id="KW-0963">Cytoplasm</keyword>
<keyword id="KW-0274">FAD</keyword>
<keyword id="KW-0285">Flavoprotein</keyword>
<keyword id="KW-0521">NADP</keyword>
<keyword id="KW-0560">Oxidoreductase</keyword>
<keyword id="KW-0573">Peptidoglycan synthesis</keyword>
<organism>
    <name type="scientific">Rhizobium johnstonii (strain DSM 114642 / LMG 32736 / 3841)</name>
    <name type="common">Rhizobium leguminosarum bv. viciae</name>
    <dbReference type="NCBI Taxonomy" id="216596"/>
    <lineage>
        <taxon>Bacteria</taxon>
        <taxon>Pseudomonadati</taxon>
        <taxon>Pseudomonadota</taxon>
        <taxon>Alphaproteobacteria</taxon>
        <taxon>Hyphomicrobiales</taxon>
        <taxon>Rhizobiaceae</taxon>
        <taxon>Rhizobium/Agrobacterium group</taxon>
        <taxon>Rhizobium</taxon>
        <taxon>Rhizobium johnstonii</taxon>
    </lineage>
</organism>
<sequence length="324" mass="35320">MKQVNGEKLLASLGDGVKDIRGRITPDAPMDRVTWFRAGGLAELMFQPHDIDDLVAFLKILPEEVPLTVVGVGSNILVRDGGIPGVVLRLSAKGFGFVELAGENRILAGAICPDKHVAAMAMDNGIGGFHFFYGIPGGIGGAARMNAGANGVETRERLIEVHAVDRKGDKHVLSNAEMGYSYRHSTASTDLIFTSVLFEGYPEERAQIRAEMDAVRNHRETVQPVREKTGGSTFKNPAGHSAWKLIDEAGCRGLVIGGAQMSSLHCNFMINMGQATGYDLEYLGEQVRREVFEKDGIKLEWEIKRLGVFMPGREVRPFHGVTSE</sequence>
<name>MURB_RHIJ3</name>
<accession>Q1ME35</accession>
<feature type="chain" id="PRO_0000332493" description="UDP-N-acetylenolpyruvoylglucosamine reductase">
    <location>
        <begin position="1"/>
        <end position="324"/>
    </location>
</feature>
<feature type="domain" description="FAD-binding PCMH-type" evidence="1">
    <location>
        <begin position="36"/>
        <end position="203"/>
    </location>
</feature>
<feature type="active site" evidence="1">
    <location>
        <position position="183"/>
    </location>
</feature>
<feature type="active site" description="Proton donor" evidence="1">
    <location>
        <position position="232"/>
    </location>
</feature>
<feature type="active site" evidence="1">
    <location>
        <position position="302"/>
    </location>
</feature>
<evidence type="ECO:0000255" key="1">
    <source>
        <dbReference type="HAMAP-Rule" id="MF_00037"/>
    </source>
</evidence>
<proteinExistence type="inferred from homology"/>
<gene>
    <name evidence="1" type="primary">murB</name>
    <name type="ordered locus">RL3305</name>
</gene>
<comment type="function">
    <text evidence="1">Cell wall formation.</text>
</comment>
<comment type="catalytic activity">
    <reaction evidence="1">
        <text>UDP-N-acetyl-alpha-D-muramate + NADP(+) = UDP-N-acetyl-3-O-(1-carboxyvinyl)-alpha-D-glucosamine + NADPH + H(+)</text>
        <dbReference type="Rhea" id="RHEA:12248"/>
        <dbReference type="ChEBI" id="CHEBI:15378"/>
        <dbReference type="ChEBI" id="CHEBI:57783"/>
        <dbReference type="ChEBI" id="CHEBI:58349"/>
        <dbReference type="ChEBI" id="CHEBI:68483"/>
        <dbReference type="ChEBI" id="CHEBI:70757"/>
        <dbReference type="EC" id="1.3.1.98"/>
    </reaction>
</comment>
<comment type="cofactor">
    <cofactor evidence="1">
        <name>FAD</name>
        <dbReference type="ChEBI" id="CHEBI:57692"/>
    </cofactor>
</comment>
<comment type="pathway">
    <text evidence="1">Cell wall biogenesis; peptidoglycan biosynthesis.</text>
</comment>
<comment type="subcellular location">
    <subcellularLocation>
        <location evidence="1">Cytoplasm</location>
    </subcellularLocation>
</comment>
<comment type="similarity">
    <text evidence="1">Belongs to the MurB family.</text>
</comment>